<comment type="catalytic activity">
    <reaction>
        <text>[thioredoxin]-dithiol + NADP(+) = [thioredoxin]-disulfide + NADPH + H(+)</text>
        <dbReference type="Rhea" id="RHEA:20345"/>
        <dbReference type="Rhea" id="RHEA-COMP:10698"/>
        <dbReference type="Rhea" id="RHEA-COMP:10700"/>
        <dbReference type="ChEBI" id="CHEBI:15378"/>
        <dbReference type="ChEBI" id="CHEBI:29950"/>
        <dbReference type="ChEBI" id="CHEBI:50058"/>
        <dbReference type="ChEBI" id="CHEBI:57783"/>
        <dbReference type="ChEBI" id="CHEBI:58349"/>
        <dbReference type="EC" id="1.8.1.9"/>
    </reaction>
</comment>
<comment type="cofactor">
    <cofactor evidence="2">
        <name>FAD</name>
        <dbReference type="ChEBI" id="CHEBI:57692"/>
    </cofactor>
    <text evidence="2">Binds 1 FAD per subunit.</text>
</comment>
<comment type="subunit">
    <text evidence="2">Homodimer.</text>
</comment>
<comment type="subcellular location">
    <subcellularLocation>
        <location evidence="1">Cytoplasm</location>
    </subcellularLocation>
</comment>
<comment type="miscellaneous">
    <text>The active site is a redox-active disulfide bond.</text>
</comment>
<comment type="similarity">
    <text evidence="3">Belongs to the class-II pyridine nucleotide-disulfide oxidoreductase family.</text>
</comment>
<reference key="1">
    <citation type="journal article" date="1995" name="Eur. J. Biochem.">
        <title>Glycine reductase of Clostridium litorale. Cloning, sequencing, and molecular analysis of the grdAB operon that contains two in-frame TGA codons for selenium incorporation.</title>
        <authorList>
            <person name="Kreimer S."/>
            <person name="Andreesen J.R."/>
        </authorList>
    </citation>
    <scope>NUCLEOTIDE SEQUENCE [GENOMIC DNA]</scope>
</reference>
<sequence length="315" mass="33946">MENVYDIAIIGSGPAGLAAALYGARAKMKTLLLEGMKVGGQIVITHEVANYPGSVPEATGPSLIGRMEEQVEEFGAERVMDNIVDVDFTDKIKVLKGAKGEYKAKAVIVATGASPKLAGCPGEKELTGKGVSYCATCDADFFEDMEVFVIGGGDTAVEEAMFLTKFARKVTIVHRRAELRAAKSIQEKAFKNEKLNFMWNTVIEEIKGDGIVESAVFKNRETGEVTEFVAPEEDGTFGIFVFIGYDPKSALVEGKLELDETGYIPTDDNMKTNVEGVFAAGDIRVKSLRQVVTATADGAIAAVQAEKYIEELFAE</sequence>
<evidence type="ECO:0000250" key="1"/>
<evidence type="ECO:0000250" key="2">
    <source>
        <dbReference type="UniProtKB" id="P0A9P4"/>
    </source>
</evidence>
<evidence type="ECO:0000305" key="3"/>
<protein>
    <recommendedName>
        <fullName>Thioredoxin reductase</fullName>
        <shortName>TRXR</shortName>
        <ecNumber>1.8.1.9</ecNumber>
    </recommendedName>
</protein>
<feature type="chain" id="PRO_0000166727" description="Thioredoxin reductase">
    <location>
        <begin position="1"/>
        <end position="315"/>
    </location>
</feature>
<feature type="binding site" evidence="2">
    <location>
        <begin position="34"/>
        <end position="41"/>
    </location>
    <ligand>
        <name>FAD</name>
        <dbReference type="ChEBI" id="CHEBI:57692"/>
    </ligand>
</feature>
<feature type="binding site" evidence="2">
    <location>
        <begin position="282"/>
        <end position="291"/>
    </location>
    <ligand>
        <name>FAD</name>
        <dbReference type="ChEBI" id="CHEBI:57692"/>
    </ligand>
</feature>
<feature type="disulfide bond" description="Redox-active" evidence="2">
    <location>
        <begin position="134"/>
        <end position="137"/>
    </location>
</feature>
<gene>
    <name type="primary">trxB</name>
</gene>
<dbReference type="EC" id="1.8.1.9"/>
<dbReference type="EMBL" id="U24268">
    <property type="protein sequence ID" value="AAC43575.1"/>
    <property type="molecule type" value="Genomic_DNA"/>
</dbReference>
<dbReference type="PIR" id="S63990">
    <property type="entry name" value="S63990"/>
</dbReference>
<dbReference type="SMR" id="P52213"/>
<dbReference type="GO" id="GO:0005737">
    <property type="term" value="C:cytoplasm"/>
    <property type="evidence" value="ECO:0007669"/>
    <property type="project" value="UniProtKB-SubCell"/>
</dbReference>
<dbReference type="GO" id="GO:0004791">
    <property type="term" value="F:thioredoxin-disulfide reductase (NADPH) activity"/>
    <property type="evidence" value="ECO:0007669"/>
    <property type="project" value="UniProtKB-EC"/>
</dbReference>
<dbReference type="GO" id="GO:0019430">
    <property type="term" value="P:removal of superoxide radicals"/>
    <property type="evidence" value="ECO:0007669"/>
    <property type="project" value="InterPro"/>
</dbReference>
<dbReference type="Gene3D" id="3.50.50.60">
    <property type="entry name" value="FAD/NAD(P)-binding domain"/>
    <property type="match status" value="2"/>
</dbReference>
<dbReference type="InterPro" id="IPR036188">
    <property type="entry name" value="FAD/NAD-bd_sf"/>
</dbReference>
<dbReference type="InterPro" id="IPR023753">
    <property type="entry name" value="FAD/NAD-binding_dom"/>
</dbReference>
<dbReference type="InterPro" id="IPR050097">
    <property type="entry name" value="Ferredoxin-NADP_redctase_2"/>
</dbReference>
<dbReference type="InterPro" id="IPR008255">
    <property type="entry name" value="Pyr_nucl-diS_OxRdtase_2_AS"/>
</dbReference>
<dbReference type="InterPro" id="IPR005982">
    <property type="entry name" value="Thioredox_Rdtase"/>
</dbReference>
<dbReference type="NCBIfam" id="TIGR01292">
    <property type="entry name" value="TRX_reduct"/>
    <property type="match status" value="1"/>
</dbReference>
<dbReference type="PANTHER" id="PTHR48105">
    <property type="entry name" value="THIOREDOXIN REDUCTASE 1-RELATED-RELATED"/>
    <property type="match status" value="1"/>
</dbReference>
<dbReference type="Pfam" id="PF07992">
    <property type="entry name" value="Pyr_redox_2"/>
    <property type="match status" value="1"/>
</dbReference>
<dbReference type="PRINTS" id="PR00368">
    <property type="entry name" value="FADPNR"/>
</dbReference>
<dbReference type="PRINTS" id="PR00469">
    <property type="entry name" value="PNDRDTASEII"/>
</dbReference>
<dbReference type="SUPFAM" id="SSF51905">
    <property type="entry name" value="FAD/NAD(P)-binding domain"/>
    <property type="match status" value="1"/>
</dbReference>
<dbReference type="PROSITE" id="PS00573">
    <property type="entry name" value="PYRIDINE_REDOX_2"/>
    <property type="match status" value="1"/>
</dbReference>
<accession>P52213</accession>
<name>TRXB_PEPLI</name>
<proteinExistence type="inferred from homology"/>
<organism>
    <name type="scientific">Peptoclostridium litorale</name>
    <name type="common">Clostridium litorale</name>
    <dbReference type="NCBI Taxonomy" id="1557"/>
    <lineage>
        <taxon>Bacteria</taxon>
        <taxon>Bacillati</taxon>
        <taxon>Bacillota</taxon>
        <taxon>Clostridia</taxon>
        <taxon>Peptostreptococcales</taxon>
        <taxon>Peptoclostridiaceae</taxon>
        <taxon>Peptoclostridium</taxon>
    </lineage>
</organism>
<keyword id="KW-0963">Cytoplasm</keyword>
<keyword id="KW-1015">Disulfide bond</keyword>
<keyword id="KW-0274">FAD</keyword>
<keyword id="KW-0285">Flavoprotein</keyword>
<keyword id="KW-0521">NADP</keyword>
<keyword id="KW-0560">Oxidoreductase</keyword>
<keyword id="KW-0676">Redox-active center</keyword>